<comment type="similarity">
    <text evidence="1">Belongs to the bacterial ribosomal protein bS16 family.</text>
</comment>
<dbReference type="EMBL" id="CP000020">
    <property type="protein sequence ID" value="AAW85044.1"/>
    <property type="molecule type" value="Genomic_DNA"/>
</dbReference>
<dbReference type="RefSeq" id="WP_005417799.1">
    <property type="nucleotide sequence ID" value="NZ_CAWLES010000001.1"/>
</dbReference>
<dbReference type="RefSeq" id="YP_203932.1">
    <property type="nucleotide sequence ID" value="NC_006840.2"/>
</dbReference>
<dbReference type="SMR" id="Q5E7F2"/>
<dbReference type="STRING" id="312309.VF_0549"/>
<dbReference type="EnsemblBacteria" id="AAW85044">
    <property type="protein sequence ID" value="AAW85044"/>
    <property type="gene ID" value="VF_0549"/>
</dbReference>
<dbReference type="GeneID" id="54163198"/>
<dbReference type="KEGG" id="vfi:VF_0549"/>
<dbReference type="PATRIC" id="fig|312309.11.peg.542"/>
<dbReference type="eggNOG" id="COG0228">
    <property type="taxonomic scope" value="Bacteria"/>
</dbReference>
<dbReference type="HOGENOM" id="CLU_100590_5_1_6"/>
<dbReference type="OrthoDB" id="9807878at2"/>
<dbReference type="Proteomes" id="UP000000537">
    <property type="component" value="Chromosome I"/>
</dbReference>
<dbReference type="GO" id="GO:0005737">
    <property type="term" value="C:cytoplasm"/>
    <property type="evidence" value="ECO:0007669"/>
    <property type="project" value="UniProtKB-ARBA"/>
</dbReference>
<dbReference type="GO" id="GO:0015935">
    <property type="term" value="C:small ribosomal subunit"/>
    <property type="evidence" value="ECO:0007669"/>
    <property type="project" value="TreeGrafter"/>
</dbReference>
<dbReference type="GO" id="GO:0003735">
    <property type="term" value="F:structural constituent of ribosome"/>
    <property type="evidence" value="ECO:0007669"/>
    <property type="project" value="InterPro"/>
</dbReference>
<dbReference type="GO" id="GO:0006412">
    <property type="term" value="P:translation"/>
    <property type="evidence" value="ECO:0007669"/>
    <property type="project" value="UniProtKB-UniRule"/>
</dbReference>
<dbReference type="FunFam" id="3.30.1320.10:FF:000001">
    <property type="entry name" value="30S ribosomal protein S16"/>
    <property type="match status" value="1"/>
</dbReference>
<dbReference type="Gene3D" id="3.30.1320.10">
    <property type="match status" value="1"/>
</dbReference>
<dbReference type="HAMAP" id="MF_00385">
    <property type="entry name" value="Ribosomal_bS16"/>
    <property type="match status" value="1"/>
</dbReference>
<dbReference type="InterPro" id="IPR000307">
    <property type="entry name" value="Ribosomal_bS16"/>
</dbReference>
<dbReference type="InterPro" id="IPR020592">
    <property type="entry name" value="Ribosomal_bS16_CS"/>
</dbReference>
<dbReference type="InterPro" id="IPR023803">
    <property type="entry name" value="Ribosomal_bS16_dom_sf"/>
</dbReference>
<dbReference type="NCBIfam" id="TIGR00002">
    <property type="entry name" value="S16"/>
    <property type="match status" value="1"/>
</dbReference>
<dbReference type="PANTHER" id="PTHR12919">
    <property type="entry name" value="30S RIBOSOMAL PROTEIN S16"/>
    <property type="match status" value="1"/>
</dbReference>
<dbReference type="PANTHER" id="PTHR12919:SF20">
    <property type="entry name" value="SMALL RIBOSOMAL SUBUNIT PROTEIN BS16M"/>
    <property type="match status" value="1"/>
</dbReference>
<dbReference type="Pfam" id="PF00886">
    <property type="entry name" value="Ribosomal_S16"/>
    <property type="match status" value="1"/>
</dbReference>
<dbReference type="SUPFAM" id="SSF54565">
    <property type="entry name" value="Ribosomal protein S16"/>
    <property type="match status" value="1"/>
</dbReference>
<dbReference type="PROSITE" id="PS00732">
    <property type="entry name" value="RIBOSOMAL_S16"/>
    <property type="match status" value="1"/>
</dbReference>
<evidence type="ECO:0000255" key="1">
    <source>
        <dbReference type="HAMAP-Rule" id="MF_00385"/>
    </source>
</evidence>
<evidence type="ECO:0000305" key="2"/>
<accession>Q5E7F2</accession>
<protein>
    <recommendedName>
        <fullName evidence="1">Small ribosomal subunit protein bS16</fullName>
    </recommendedName>
    <alternativeName>
        <fullName evidence="2">30S ribosomal protein S16</fullName>
    </alternativeName>
</protein>
<organism>
    <name type="scientific">Aliivibrio fischeri (strain ATCC 700601 / ES114)</name>
    <name type="common">Vibrio fischeri</name>
    <dbReference type="NCBI Taxonomy" id="312309"/>
    <lineage>
        <taxon>Bacteria</taxon>
        <taxon>Pseudomonadati</taxon>
        <taxon>Pseudomonadota</taxon>
        <taxon>Gammaproteobacteria</taxon>
        <taxon>Vibrionales</taxon>
        <taxon>Vibrionaceae</taxon>
        <taxon>Aliivibrio</taxon>
    </lineage>
</organism>
<gene>
    <name evidence="1" type="primary">rpsP</name>
    <name type="ordered locus">VF_0549</name>
</gene>
<proteinExistence type="inferred from homology"/>
<sequence>MVTIRLARHGAKKRPFYQIVVADSRFKATGRYIEKVGFFNPTAQGQEEGLRLDLDRVGHWVEQGAGLSDRVAKLVKDAKKAA</sequence>
<reference key="1">
    <citation type="journal article" date="2005" name="Proc. Natl. Acad. Sci. U.S.A.">
        <title>Complete genome sequence of Vibrio fischeri: a symbiotic bacterium with pathogenic congeners.</title>
        <authorList>
            <person name="Ruby E.G."/>
            <person name="Urbanowski M."/>
            <person name="Campbell J."/>
            <person name="Dunn A."/>
            <person name="Faini M."/>
            <person name="Gunsalus R."/>
            <person name="Lostroh P."/>
            <person name="Lupp C."/>
            <person name="McCann J."/>
            <person name="Millikan D."/>
            <person name="Schaefer A."/>
            <person name="Stabb E."/>
            <person name="Stevens A."/>
            <person name="Visick K."/>
            <person name="Whistler C."/>
            <person name="Greenberg E.P."/>
        </authorList>
    </citation>
    <scope>NUCLEOTIDE SEQUENCE [LARGE SCALE GENOMIC DNA]</scope>
    <source>
        <strain>ATCC 700601 / ES114</strain>
    </source>
</reference>
<feature type="chain" id="PRO_0000243891" description="Small ribosomal subunit protein bS16">
    <location>
        <begin position="1"/>
        <end position="82"/>
    </location>
</feature>
<name>RS16_ALIF1</name>
<keyword id="KW-1185">Reference proteome</keyword>
<keyword id="KW-0687">Ribonucleoprotein</keyword>
<keyword id="KW-0689">Ribosomal protein</keyword>